<organismHost>
    <name type="scientific">Pan</name>
    <name type="common">chimpanzees</name>
    <dbReference type="NCBI Taxonomy" id="9596"/>
</organismHost>
<proteinExistence type="evidence at transcript level"/>
<keyword id="KW-1032">Host cell membrane</keyword>
<keyword id="KW-1035">Host cytoplasm</keyword>
<keyword id="KW-1043">Host membrane</keyword>
<keyword id="KW-0945">Host-virus interaction</keyword>
<keyword id="KW-0472">Membrane</keyword>
<keyword id="KW-0597">Phosphoprotein</keyword>
<keyword id="KW-1185">Reference proteome</keyword>
<keyword id="KW-0832">Ubl conjugation</keyword>
<keyword id="KW-0833">Ubl conjugation pathway</keyword>
<keyword id="KW-0946">Virion</keyword>
<gene>
    <name type="primary">vif</name>
</gene>
<accession>P17284</accession>
<evidence type="ECO:0000250" key="1"/>
<evidence type="ECO:0000305" key="2"/>
<sequence length="193" mass="23048">MENRWQVMIVWQVDRMRIKTWNSLVKYHIYRSKKARGWFYRHHYDHPNPKVASEIHIPFRDYSKLIVTTYWALSPGERAWHLGHGVSIQWRLGSYVTQVDPFTADRLIHSQYFDCFAETAIRRAILGQLVAPRCEYKEGHRQVGSLQFLALKALISERRHRPPLPSVAKLTEDRWNKHQRTKVHQENLTRNGH</sequence>
<name>VIF_SIVCZ</name>
<reference key="1">
    <citation type="journal article" date="1990" name="Nature">
        <title>Genetic organization of a chimpanzee lentivirus related to HIV-1.</title>
        <authorList>
            <person name="Huet T."/>
            <person name="Cheynier R."/>
            <person name="Meyerhans A."/>
            <person name="Roelants G."/>
            <person name="Wain-Hobson S."/>
        </authorList>
    </citation>
    <scope>NUCLEOTIDE SEQUENCE [GENOMIC RNA]</scope>
</reference>
<dbReference type="EMBL" id="X52154">
    <property type="protein sequence ID" value="CAA36402.1"/>
    <property type="molecule type" value="Genomic_RNA"/>
</dbReference>
<dbReference type="PIR" id="S09985">
    <property type="entry name" value="ASLJSI"/>
</dbReference>
<dbReference type="SMR" id="P17284"/>
<dbReference type="Proteomes" id="UP000009153">
    <property type="component" value="Segment"/>
</dbReference>
<dbReference type="GO" id="GO:0030430">
    <property type="term" value="C:host cell cytoplasm"/>
    <property type="evidence" value="ECO:0007669"/>
    <property type="project" value="UniProtKB-SubCell"/>
</dbReference>
<dbReference type="GO" id="GO:0020002">
    <property type="term" value="C:host cell plasma membrane"/>
    <property type="evidence" value="ECO:0007669"/>
    <property type="project" value="UniProtKB-SubCell"/>
</dbReference>
<dbReference type="GO" id="GO:0016020">
    <property type="term" value="C:membrane"/>
    <property type="evidence" value="ECO:0007669"/>
    <property type="project" value="UniProtKB-KW"/>
</dbReference>
<dbReference type="GO" id="GO:0044423">
    <property type="term" value="C:virion component"/>
    <property type="evidence" value="ECO:0007669"/>
    <property type="project" value="UniProtKB-KW"/>
</dbReference>
<dbReference type="GO" id="GO:0019058">
    <property type="term" value="P:viral life cycle"/>
    <property type="evidence" value="ECO:0007669"/>
    <property type="project" value="InterPro"/>
</dbReference>
<dbReference type="InterPro" id="IPR000475">
    <property type="entry name" value="Vif"/>
</dbReference>
<dbReference type="Pfam" id="PF00559">
    <property type="entry name" value="Vif"/>
    <property type="match status" value="1"/>
</dbReference>
<dbReference type="PRINTS" id="PR00349">
    <property type="entry name" value="VIRIONINFFCT"/>
</dbReference>
<organism>
    <name type="scientific">Simian immunodeficiency virus (isolate CPZ GAB1)</name>
    <name type="common">SIV-cpz</name>
    <name type="synonym">Chimpanzee immunodeficiency virus</name>
    <dbReference type="NCBI Taxonomy" id="402771"/>
    <lineage>
        <taxon>Viruses</taxon>
        <taxon>Riboviria</taxon>
        <taxon>Pararnavirae</taxon>
        <taxon>Artverviricota</taxon>
        <taxon>Revtraviricetes</taxon>
        <taxon>Ortervirales</taxon>
        <taxon>Retroviridae</taxon>
        <taxon>Orthoretrovirinae</taxon>
        <taxon>Lentivirus</taxon>
        <taxon>Simian immunodeficiency virus</taxon>
    </lineage>
</organism>
<feature type="chain" id="PRO_0000085336" description="Virion infectivity factor">
    <location>
        <begin position="1"/>
        <end position="193"/>
    </location>
</feature>
<feature type="region of interest" description="RNA-binding" evidence="1">
    <location>
        <begin position="75"/>
        <end position="114"/>
    </location>
</feature>
<feature type="region of interest" description="Multimerization" evidence="1">
    <location>
        <begin position="152"/>
        <end position="165"/>
    </location>
</feature>
<feature type="region of interest" description="Membrane association" evidence="1">
    <location>
        <begin position="171"/>
        <end position="172"/>
    </location>
</feature>
<feature type="short sequence motif" description="HCCH motif" evidence="1">
    <location>
        <begin position="109"/>
        <end position="140"/>
    </location>
</feature>
<feature type="short sequence motif" description="BC-box-like motif" evidence="1">
    <location>
        <begin position="145"/>
        <end position="154"/>
    </location>
</feature>
<feature type="modified residue" description="Phosphothreonine; by host" evidence="1">
    <location>
        <position position="97"/>
    </location>
</feature>
<feature type="modified residue" description="Phosphoserine; by host" evidence="1">
    <location>
        <position position="145"/>
    </location>
</feature>
<feature type="modified residue" description="Phosphoserine; by host" evidence="1">
    <location>
        <position position="166"/>
    </location>
</feature>
<feature type="modified residue" description="Phosphothreonine; by host" evidence="1">
    <location>
        <position position="189"/>
    </location>
</feature>
<protein>
    <recommendedName>
        <fullName>Virion infectivity factor</fullName>
        <shortName>Vif</shortName>
    </recommendedName>
    <alternativeName>
        <fullName>Q protein</fullName>
    </alternativeName>
    <alternativeName>
        <fullName>SOR protein</fullName>
    </alternativeName>
</protein>
<comment type="function">
    <text evidence="1">Counteracts the innate antiviral activity of APOBEC3G. Forms a complex with host APOBEC3G thus preventing the entry of this lethally hypermutating enzyme into progeny virions. Functions as an adapter molecule, recruiting APOBEC3G to the ubiquitin-proteasome machinery. Targets APOBEC3G for degradation through the assembly with elongin BC complex, CUL5 and RBX1. Binds viral RNA and affects the stability of viral nucleoprotein core. May play a role in viral morphology (By similarity).</text>
</comment>
<comment type="subunit">
    <text evidence="1">Homomultimer; in vitro and presumably in vivo. Interacts with viral Pr55Gag precursor and host APOBEC3G. The interaction between Vif and APOBEC3G is species-specific, which may play a role in restricting the replication of SIV to their host. Forms an E3 ligase complex by interacting with host CUL5 and elongin BC complex (ELOB and ELOC) (By similarity).</text>
</comment>
<comment type="subcellular location">
    <subcellularLocation>
        <location evidence="1">Host cytoplasm</location>
    </subcellularLocation>
    <subcellularLocation>
        <location evidence="1">Host cell membrane</location>
        <topology evidence="1">Peripheral membrane protein</topology>
        <orientation evidence="1">Cytoplasmic side</orientation>
    </subcellularLocation>
    <subcellularLocation>
        <location evidence="1">Virion</location>
    </subcellularLocation>
    <text evidence="1">Seems to colocalize with intermediate filament vimentin. A fraction is associated with the cytoplasmic side of cellular membranes, presumably via the interaction with Pr55Gag precursor (By similarity).</text>
</comment>
<comment type="induction">
    <text>Expressed late during infection in a Rev-dependent manner.</text>
</comment>
<comment type="domain">
    <text evidence="1">The BC-like-box motif mediates the interaction with elongin BC complex.</text>
</comment>
<comment type="domain">
    <text evidence="1">The HCCH motif (H-x(5)-C-x(18)-C-x(5)-H) mediates the interaction with CUL5.</text>
</comment>
<comment type="PTM">
    <text evidence="1">Processed in virion by the viral protease.</text>
</comment>
<comment type="PTM">
    <text evidence="1">Highly phosphorylated on serine and threonine residues.</text>
</comment>
<comment type="PTM">
    <text evidence="1">Polyubiquitinated and degraded by the proteasome in the presence of APOBEC3G.</text>
</comment>
<comment type="miscellaneous">
    <text>Vif-defective viruses show catastrophic failure in reverse transcription due to APOBEC-induced mutations that initiate a DNA base repair pathway and compromise the structural integrity of the ssDNA. In the absence of Vif, the virion is morphologically abnormal.</text>
</comment>
<comment type="similarity">
    <text evidence="2">Belongs to the primate lentivirus group Vif protein family.</text>
</comment>